<name>VRP1_SALEN</name>
<feature type="chain" id="PRO_0000221661" description="28.1 kDa virulence protein">
    <location>
        <begin position="1"/>
        <end position="255"/>
    </location>
</feature>
<keyword id="KW-0614">Plasmid</keyword>
<keyword id="KW-0843">Virulence</keyword>
<sequence length="255" mass="28201">MNMNQTTSPALSQVETAIRVPAGNFAKYNYYSVFDIVRQTRKQFINANMSWPGSRGGKAWDLAMGQAQYIRCMFRENQLTRRVRGTLQQTLDNGTNLSSSAVGGIQGQAERRPDLATLMVVNDAINQQIPTLLPYHFPHDQVELSLLNTDVSLEDIISESSIDWPWFLSNSLTGDNSNYAMELASRLSPEQQTLPTEPDNSTATDLTSFYQTNLGLKTADYTPFEALNTFARQLAITVPPGGTVDCGYSACQPAV</sequence>
<gene>
    <name type="primary">spvA</name>
</gene>
<reference key="1">
    <citation type="journal article" date="1994" name="Microbiology">
        <title>Virulence region of plasmid pNL2001 of Salmonella enteritidis.</title>
        <authorList>
            <person name="Suzuki S."/>
            <person name="Komase K."/>
            <person name="Matsui H."/>
            <person name="Abe A."/>
            <person name="Kawahara K."/>
            <person name="Tamura Y."/>
            <person name="Kijima M."/>
            <person name="Danbara H."/>
            <person name="Nakamura M."/>
            <person name="Sato S."/>
        </authorList>
    </citation>
    <scope>NUCLEOTIDE SEQUENCE [GENOMIC DNA]</scope>
    <source>
        <strain>AL1190</strain>
    </source>
</reference>
<accession>P55219</accession>
<evidence type="ECO:0000305" key="1"/>
<comment type="function">
    <text>Not known. This protein is involved in the virulence of salmonellas.</text>
</comment>
<comment type="similarity">
    <text evidence="1">Belongs to the SpvA family.</text>
</comment>
<organism>
    <name type="scientific">Salmonella enteritidis</name>
    <dbReference type="NCBI Taxonomy" id="149539"/>
    <lineage>
        <taxon>Bacteria</taxon>
        <taxon>Pseudomonadati</taxon>
        <taxon>Pseudomonadota</taxon>
        <taxon>Gammaproteobacteria</taxon>
        <taxon>Enterobacterales</taxon>
        <taxon>Enterobacteriaceae</taxon>
        <taxon>Salmonella</taxon>
    </lineage>
</organism>
<dbReference type="EMBL" id="D14490">
    <property type="protein sequence ID" value="BAA03382.1"/>
    <property type="molecule type" value="Genomic_DNA"/>
</dbReference>
<dbReference type="RefSeq" id="WP_001676649.1">
    <property type="nucleotide sequence ID" value="NZ_WIDC01000109.1"/>
</dbReference>
<dbReference type="RefSeq" id="YP_006956742.1">
    <property type="nucleotide sequence ID" value="NC_019120.1"/>
</dbReference>
<dbReference type="InterPro" id="IPR018003">
    <property type="entry name" value="Insecticidal_toxin/plasmid_vir"/>
</dbReference>
<dbReference type="InterPro" id="IPR003518">
    <property type="entry name" value="Sal_SpvA"/>
</dbReference>
<dbReference type="NCBIfam" id="NF011759">
    <property type="entry name" value="PRK15212.1"/>
    <property type="match status" value="1"/>
</dbReference>
<dbReference type="Pfam" id="PF03538">
    <property type="entry name" value="VRP1"/>
    <property type="match status" value="2"/>
</dbReference>
<dbReference type="PRINTS" id="PR01340">
    <property type="entry name" value="SALSPVAPROT"/>
</dbReference>
<protein>
    <recommendedName>
        <fullName>28.1 kDa virulence protein</fullName>
    </recommendedName>
</protein>
<proteinExistence type="inferred from homology"/>
<geneLocation type="plasmid">
    <name>pNL2001</name>
</geneLocation>